<dbReference type="EC" id="1.14.-.-" evidence="1"/>
<dbReference type="EMBL" id="AJ938182">
    <property type="protein sequence ID" value="CAI82253.1"/>
    <property type="molecule type" value="Genomic_DNA"/>
</dbReference>
<dbReference type="RefSeq" id="WP_001109275.1">
    <property type="nucleotide sequence ID" value="NC_007622.1"/>
</dbReference>
<dbReference type="SMR" id="Q2YZA3"/>
<dbReference type="KEGG" id="sab:SAB2565"/>
<dbReference type="HOGENOM" id="CLU_038878_1_0_9"/>
<dbReference type="GO" id="GO:0016705">
    <property type="term" value="F:oxidoreductase activity, acting on paired donors, with incorporation or reduction of molecular oxygen"/>
    <property type="evidence" value="ECO:0007669"/>
    <property type="project" value="UniProtKB-UniRule"/>
</dbReference>
<dbReference type="GO" id="GO:0006400">
    <property type="term" value="P:tRNA modification"/>
    <property type="evidence" value="ECO:0007669"/>
    <property type="project" value="UniProtKB-UniRule"/>
</dbReference>
<dbReference type="CDD" id="cd01518">
    <property type="entry name" value="RHOD_YceA"/>
    <property type="match status" value="1"/>
</dbReference>
<dbReference type="Gene3D" id="3.30.70.100">
    <property type="match status" value="1"/>
</dbReference>
<dbReference type="Gene3D" id="3.40.250.10">
    <property type="entry name" value="Rhodanese-like domain"/>
    <property type="match status" value="1"/>
</dbReference>
<dbReference type="HAMAP" id="MF_00469">
    <property type="entry name" value="TrhO"/>
    <property type="match status" value="1"/>
</dbReference>
<dbReference type="InterPro" id="IPR001763">
    <property type="entry name" value="Rhodanese-like_dom"/>
</dbReference>
<dbReference type="InterPro" id="IPR036873">
    <property type="entry name" value="Rhodanese-like_dom_sf"/>
</dbReference>
<dbReference type="InterPro" id="IPR022111">
    <property type="entry name" value="Rhodanese_C"/>
</dbReference>
<dbReference type="InterPro" id="IPR020936">
    <property type="entry name" value="TrhO"/>
</dbReference>
<dbReference type="InterPro" id="IPR040503">
    <property type="entry name" value="TRHO_N"/>
</dbReference>
<dbReference type="NCBIfam" id="NF001135">
    <property type="entry name" value="PRK00142.1-3"/>
    <property type="match status" value="1"/>
</dbReference>
<dbReference type="PANTHER" id="PTHR43268:SF3">
    <property type="entry name" value="RHODANESE-LIKE DOMAIN-CONTAINING PROTEIN 7-RELATED"/>
    <property type="match status" value="1"/>
</dbReference>
<dbReference type="PANTHER" id="PTHR43268">
    <property type="entry name" value="THIOSULFATE SULFURTRANSFERASE/RHODANESE-LIKE DOMAIN-CONTAINING PROTEIN 2"/>
    <property type="match status" value="1"/>
</dbReference>
<dbReference type="Pfam" id="PF00581">
    <property type="entry name" value="Rhodanese"/>
    <property type="match status" value="1"/>
</dbReference>
<dbReference type="Pfam" id="PF12368">
    <property type="entry name" value="Rhodanese_C"/>
    <property type="match status" value="1"/>
</dbReference>
<dbReference type="Pfam" id="PF17773">
    <property type="entry name" value="UPF0176_N"/>
    <property type="match status" value="1"/>
</dbReference>
<dbReference type="SMART" id="SM00450">
    <property type="entry name" value="RHOD"/>
    <property type="match status" value="1"/>
</dbReference>
<dbReference type="SUPFAM" id="SSF52821">
    <property type="entry name" value="Rhodanese/Cell cycle control phosphatase"/>
    <property type="match status" value="1"/>
</dbReference>
<dbReference type="PROSITE" id="PS50206">
    <property type="entry name" value="RHODANESE_3"/>
    <property type="match status" value="1"/>
</dbReference>
<feature type="chain" id="PRO_0000242945" description="tRNA uridine(34) hydroxylase">
    <location>
        <begin position="1"/>
        <end position="318"/>
    </location>
</feature>
<feature type="domain" description="Rhodanese" evidence="1">
    <location>
        <begin position="123"/>
        <end position="217"/>
    </location>
</feature>
<feature type="active site" description="Cysteine persulfide intermediate" evidence="1">
    <location>
        <position position="177"/>
    </location>
</feature>
<proteinExistence type="inferred from homology"/>
<organism>
    <name type="scientific">Staphylococcus aureus (strain bovine RF122 / ET3-1)</name>
    <dbReference type="NCBI Taxonomy" id="273036"/>
    <lineage>
        <taxon>Bacteria</taxon>
        <taxon>Bacillati</taxon>
        <taxon>Bacillota</taxon>
        <taxon>Bacilli</taxon>
        <taxon>Bacillales</taxon>
        <taxon>Staphylococcaceae</taxon>
        <taxon>Staphylococcus</taxon>
    </lineage>
</organism>
<comment type="function">
    <text evidence="1">Catalyzes oxygen-dependent 5-hydroxyuridine (ho5U) modification at position 34 in tRNAs.</text>
</comment>
<comment type="catalytic activity">
    <reaction evidence="1">
        <text>uridine(34) in tRNA + AH2 + O2 = 5-hydroxyuridine(34) in tRNA + A + H2O</text>
        <dbReference type="Rhea" id="RHEA:64224"/>
        <dbReference type="Rhea" id="RHEA-COMP:11727"/>
        <dbReference type="Rhea" id="RHEA-COMP:13381"/>
        <dbReference type="ChEBI" id="CHEBI:13193"/>
        <dbReference type="ChEBI" id="CHEBI:15377"/>
        <dbReference type="ChEBI" id="CHEBI:15379"/>
        <dbReference type="ChEBI" id="CHEBI:17499"/>
        <dbReference type="ChEBI" id="CHEBI:65315"/>
        <dbReference type="ChEBI" id="CHEBI:136877"/>
    </reaction>
</comment>
<comment type="similarity">
    <text evidence="1">Belongs to the TrhO family.</text>
</comment>
<sequence>MNYQVLLYYKYMTIDDPEQFAQDHLAFCKAHHLKGRILVSTEGINGTLSGTKEETEQYMAHMHADERFKDMVFKIDEAEGHAFKKMHVRPRKEIVALDLEEDVDPRHTTGQYLSPVEFRKALEDDDTVIIDARNDYEFDLGHFRGAIRPNITRFRDLPDWIKENKALFADKKVVTYCTGGIRCEKFSGWLLKEGFEDIAQLHGGIATYGKDPETKGQYWDGKMYVFDDRISVDINEVEKTIIGKDWFDGKPCERYINCANPECNKQILVSEENEAKYLGACSYECAKHERNRYVQANNISDNEWQHRLTNFDDLHQHA</sequence>
<gene>
    <name evidence="1" type="primary">trhO</name>
    <name type="ordered locus">SAB2565</name>
</gene>
<reference key="1">
    <citation type="journal article" date="2007" name="PLoS ONE">
        <title>Molecular correlates of host specialization in Staphylococcus aureus.</title>
        <authorList>
            <person name="Herron-Olson L."/>
            <person name="Fitzgerald J.R."/>
            <person name="Musser J.M."/>
            <person name="Kapur V."/>
        </authorList>
    </citation>
    <scope>NUCLEOTIDE SEQUENCE [LARGE SCALE GENOMIC DNA]</scope>
    <source>
        <strain>bovine RF122 / ET3-1</strain>
    </source>
</reference>
<accession>Q2YZA3</accession>
<protein>
    <recommendedName>
        <fullName evidence="1">tRNA uridine(34) hydroxylase</fullName>
        <ecNumber evidence="1">1.14.-.-</ecNumber>
    </recommendedName>
    <alternativeName>
        <fullName evidence="1">tRNA hydroxylation protein O</fullName>
    </alternativeName>
</protein>
<evidence type="ECO:0000255" key="1">
    <source>
        <dbReference type="HAMAP-Rule" id="MF_00469"/>
    </source>
</evidence>
<name>TRHO_STAAB</name>
<keyword id="KW-0560">Oxidoreductase</keyword>
<keyword id="KW-0819">tRNA processing</keyword>